<evidence type="ECO:0000250" key="1"/>
<evidence type="ECO:0000250" key="2">
    <source>
        <dbReference type="UniProtKB" id="Q13291"/>
    </source>
</evidence>
<evidence type="ECO:0000250" key="3">
    <source>
        <dbReference type="UniProtKB" id="Q9BZW8"/>
    </source>
</evidence>
<evidence type="ECO:0000255" key="4"/>
<evidence type="ECO:0000256" key="5">
    <source>
        <dbReference type="SAM" id="MobiDB-lite"/>
    </source>
</evidence>
<evidence type="ECO:0000269" key="6">
    <source>
    </source>
</evidence>
<evidence type="ECO:0000269" key="7">
    <source>
    </source>
</evidence>
<evidence type="ECO:0000269" key="8">
    <source>
    </source>
</evidence>
<evidence type="ECO:0000269" key="9">
    <source>
    </source>
</evidence>
<evidence type="ECO:0000269" key="10">
    <source>
    </source>
</evidence>
<evidence type="ECO:0000269" key="11">
    <source>
    </source>
</evidence>
<evidence type="ECO:0000269" key="12">
    <source>
    </source>
</evidence>
<evidence type="ECO:0000269" key="13">
    <source>
    </source>
</evidence>
<evidence type="ECO:0000269" key="14">
    <source>
    </source>
</evidence>
<evidence type="ECO:0000269" key="15">
    <source>
    </source>
</evidence>
<evidence type="ECO:0000269" key="16">
    <source>
    </source>
</evidence>
<evidence type="ECO:0000269" key="17">
    <source>
    </source>
</evidence>
<evidence type="ECO:0000269" key="18">
    <source>
    </source>
</evidence>
<evidence type="ECO:0000269" key="19">
    <source>
    </source>
</evidence>
<evidence type="ECO:0000303" key="20">
    <source ref="3"/>
</evidence>
<evidence type="ECO:0000305" key="21"/>
<evidence type="ECO:0000305" key="22">
    <source>
    </source>
</evidence>
<evidence type="ECO:0000305" key="23">
    <source>
    </source>
</evidence>
<evidence type="ECO:0000305" key="24">
    <source>
    </source>
</evidence>
<evidence type="ECO:0007829" key="25">
    <source>
        <dbReference type="PDB" id="2PTT"/>
    </source>
</evidence>
<evidence type="ECO:0007829" key="26">
    <source>
        <dbReference type="PDB" id="2PTU"/>
    </source>
</evidence>
<name>CD244_MOUSE</name>
<gene>
    <name type="primary">Cd244</name>
    <name type="synonym">2b4</name>
    <name type="synonym">Nmrk</name>
</gene>
<protein>
    <recommendedName>
        <fullName>Natural killer cell receptor 2B4</fullName>
    </recommendedName>
    <alternativeName>
        <fullName>NK cell type I receptor protein 2B4</fullName>
        <shortName>NKR2B4</shortName>
    </alternativeName>
    <alternativeName>
        <fullName>Non-MHC restricted killing associated</fullName>
    </alternativeName>
    <alternativeName>
        <fullName>SLAM family member 4</fullName>
        <shortName>SLAMF4</shortName>
    </alternativeName>
    <alternativeName>
        <fullName>Signaling lymphocytic activation molecule 4</fullName>
    </alternativeName>
    <cdAntigenName>CD244</cdAntigenName>
</protein>
<organism>
    <name type="scientific">Mus musculus</name>
    <name type="common">Mouse</name>
    <dbReference type="NCBI Taxonomy" id="10090"/>
    <lineage>
        <taxon>Eukaryota</taxon>
        <taxon>Metazoa</taxon>
        <taxon>Chordata</taxon>
        <taxon>Craniata</taxon>
        <taxon>Vertebrata</taxon>
        <taxon>Euteleostomi</taxon>
        <taxon>Mammalia</taxon>
        <taxon>Eutheria</taxon>
        <taxon>Euarchontoglires</taxon>
        <taxon>Glires</taxon>
        <taxon>Rodentia</taxon>
        <taxon>Myomorpha</taxon>
        <taxon>Muroidea</taxon>
        <taxon>Muridae</taxon>
        <taxon>Murinae</taxon>
        <taxon>Mus</taxon>
        <taxon>Mus</taxon>
    </lineage>
</organism>
<reference key="1">
    <citation type="journal article" date="1993" name="J. Immunol.">
        <title>Cloning and characterization of the 2B4 gene encoding a molecule associated with non-MHC-restricted killing mediated by activated natural killer cells and T cells.</title>
        <authorList>
            <person name="Mathew P.A."/>
            <person name="Garni-Wagner B.A."/>
            <person name="Land K."/>
            <person name="Takashima A."/>
            <person name="Stoneman E."/>
            <person name="Bennett M."/>
            <person name="Kumar V."/>
        </authorList>
    </citation>
    <scope>NUCLEOTIDE SEQUENCE [MRNA] (ISOFORM 1)</scope>
    <source>
        <strain>C57BL/6J</strain>
    </source>
</reference>
<reference key="2">
    <citation type="journal article" date="2000" name="Immunogenetics">
        <title>Polymorphism in the 2B4 gene of inbred mouse strains.</title>
        <authorList>
            <person name="Kumaresan P.R."/>
            <person name="Huynh V.T."/>
            <person name="Mathew P.A."/>
        </authorList>
    </citation>
    <scope>NUCLEOTIDE SEQUENCE [MRNA] (ISOFORM 1)</scope>
    <source>
        <strain>A.CA</strain>
    </source>
</reference>
<reference key="3">
    <citation type="submission" date="1998-08" db="EMBL/GenBank/DDBJ databases">
        <title>Characterization of genomic structure and alternative splicing of the murine NK cell receptor 2B4.</title>
        <authorList>
            <person name="Stepp S.E."/>
            <person name="Schatzle J.D."/>
            <person name="Bennett M."/>
            <person name="Kumar V."/>
            <person name="Mathew P.A."/>
        </authorList>
    </citation>
    <scope>NUCLEOTIDE SEQUENCE [MRNA] (ISOFORM 2)</scope>
    <source>
        <strain>C57BL/6J</strain>
    </source>
</reference>
<reference key="4">
    <citation type="journal article" date="2005" name="Science">
        <title>The transcriptional landscape of the mammalian genome.</title>
        <authorList>
            <person name="Carninci P."/>
            <person name="Kasukawa T."/>
            <person name="Katayama S."/>
            <person name="Gough J."/>
            <person name="Frith M.C."/>
            <person name="Maeda N."/>
            <person name="Oyama R."/>
            <person name="Ravasi T."/>
            <person name="Lenhard B."/>
            <person name="Wells C."/>
            <person name="Kodzius R."/>
            <person name="Shimokawa K."/>
            <person name="Bajic V.B."/>
            <person name="Brenner S.E."/>
            <person name="Batalov S."/>
            <person name="Forrest A.R."/>
            <person name="Zavolan M."/>
            <person name="Davis M.J."/>
            <person name="Wilming L.G."/>
            <person name="Aidinis V."/>
            <person name="Allen J.E."/>
            <person name="Ambesi-Impiombato A."/>
            <person name="Apweiler R."/>
            <person name="Aturaliya R.N."/>
            <person name="Bailey T.L."/>
            <person name="Bansal M."/>
            <person name="Baxter L."/>
            <person name="Beisel K.W."/>
            <person name="Bersano T."/>
            <person name="Bono H."/>
            <person name="Chalk A.M."/>
            <person name="Chiu K.P."/>
            <person name="Choudhary V."/>
            <person name="Christoffels A."/>
            <person name="Clutterbuck D.R."/>
            <person name="Crowe M.L."/>
            <person name="Dalla E."/>
            <person name="Dalrymple B.P."/>
            <person name="de Bono B."/>
            <person name="Della Gatta G."/>
            <person name="di Bernardo D."/>
            <person name="Down T."/>
            <person name="Engstrom P."/>
            <person name="Fagiolini M."/>
            <person name="Faulkner G."/>
            <person name="Fletcher C.F."/>
            <person name="Fukushima T."/>
            <person name="Furuno M."/>
            <person name="Futaki S."/>
            <person name="Gariboldi M."/>
            <person name="Georgii-Hemming P."/>
            <person name="Gingeras T.R."/>
            <person name="Gojobori T."/>
            <person name="Green R.E."/>
            <person name="Gustincich S."/>
            <person name="Harbers M."/>
            <person name="Hayashi Y."/>
            <person name="Hensch T.K."/>
            <person name="Hirokawa N."/>
            <person name="Hill D."/>
            <person name="Huminiecki L."/>
            <person name="Iacono M."/>
            <person name="Ikeo K."/>
            <person name="Iwama A."/>
            <person name="Ishikawa T."/>
            <person name="Jakt M."/>
            <person name="Kanapin A."/>
            <person name="Katoh M."/>
            <person name="Kawasawa Y."/>
            <person name="Kelso J."/>
            <person name="Kitamura H."/>
            <person name="Kitano H."/>
            <person name="Kollias G."/>
            <person name="Krishnan S.P."/>
            <person name="Kruger A."/>
            <person name="Kummerfeld S.K."/>
            <person name="Kurochkin I.V."/>
            <person name="Lareau L.F."/>
            <person name="Lazarevic D."/>
            <person name="Lipovich L."/>
            <person name="Liu J."/>
            <person name="Liuni S."/>
            <person name="McWilliam S."/>
            <person name="Madan Babu M."/>
            <person name="Madera M."/>
            <person name="Marchionni L."/>
            <person name="Matsuda H."/>
            <person name="Matsuzawa S."/>
            <person name="Miki H."/>
            <person name="Mignone F."/>
            <person name="Miyake S."/>
            <person name="Morris K."/>
            <person name="Mottagui-Tabar S."/>
            <person name="Mulder N."/>
            <person name="Nakano N."/>
            <person name="Nakauchi H."/>
            <person name="Ng P."/>
            <person name="Nilsson R."/>
            <person name="Nishiguchi S."/>
            <person name="Nishikawa S."/>
            <person name="Nori F."/>
            <person name="Ohara O."/>
            <person name="Okazaki Y."/>
            <person name="Orlando V."/>
            <person name="Pang K.C."/>
            <person name="Pavan W.J."/>
            <person name="Pavesi G."/>
            <person name="Pesole G."/>
            <person name="Petrovsky N."/>
            <person name="Piazza S."/>
            <person name="Reed J."/>
            <person name="Reid J.F."/>
            <person name="Ring B.Z."/>
            <person name="Ringwald M."/>
            <person name="Rost B."/>
            <person name="Ruan Y."/>
            <person name="Salzberg S.L."/>
            <person name="Sandelin A."/>
            <person name="Schneider C."/>
            <person name="Schoenbach C."/>
            <person name="Sekiguchi K."/>
            <person name="Semple C.A."/>
            <person name="Seno S."/>
            <person name="Sessa L."/>
            <person name="Sheng Y."/>
            <person name="Shibata Y."/>
            <person name="Shimada H."/>
            <person name="Shimada K."/>
            <person name="Silva D."/>
            <person name="Sinclair B."/>
            <person name="Sperling S."/>
            <person name="Stupka E."/>
            <person name="Sugiura K."/>
            <person name="Sultana R."/>
            <person name="Takenaka Y."/>
            <person name="Taki K."/>
            <person name="Tammoja K."/>
            <person name="Tan S.L."/>
            <person name="Tang S."/>
            <person name="Taylor M.S."/>
            <person name="Tegner J."/>
            <person name="Teichmann S.A."/>
            <person name="Ueda H.R."/>
            <person name="van Nimwegen E."/>
            <person name="Verardo R."/>
            <person name="Wei C.L."/>
            <person name="Yagi K."/>
            <person name="Yamanishi H."/>
            <person name="Zabarovsky E."/>
            <person name="Zhu S."/>
            <person name="Zimmer A."/>
            <person name="Hide W."/>
            <person name="Bult C."/>
            <person name="Grimmond S.M."/>
            <person name="Teasdale R.D."/>
            <person name="Liu E.T."/>
            <person name="Brusic V."/>
            <person name="Quackenbush J."/>
            <person name="Wahlestedt C."/>
            <person name="Mattick J.S."/>
            <person name="Hume D.A."/>
            <person name="Kai C."/>
            <person name="Sasaki D."/>
            <person name="Tomaru Y."/>
            <person name="Fukuda S."/>
            <person name="Kanamori-Katayama M."/>
            <person name="Suzuki M."/>
            <person name="Aoki J."/>
            <person name="Arakawa T."/>
            <person name="Iida J."/>
            <person name="Imamura K."/>
            <person name="Itoh M."/>
            <person name="Kato T."/>
            <person name="Kawaji H."/>
            <person name="Kawagashira N."/>
            <person name="Kawashima T."/>
            <person name="Kojima M."/>
            <person name="Kondo S."/>
            <person name="Konno H."/>
            <person name="Nakano K."/>
            <person name="Ninomiya N."/>
            <person name="Nishio T."/>
            <person name="Okada M."/>
            <person name="Plessy C."/>
            <person name="Shibata K."/>
            <person name="Shiraki T."/>
            <person name="Suzuki S."/>
            <person name="Tagami M."/>
            <person name="Waki K."/>
            <person name="Watahiki A."/>
            <person name="Okamura-Oho Y."/>
            <person name="Suzuki H."/>
            <person name="Kawai J."/>
            <person name="Hayashizaki Y."/>
        </authorList>
    </citation>
    <scope>NUCLEOTIDE SEQUENCE [LARGE SCALE MRNA] (ISOFORM 1)</scope>
    <source>
        <strain>C57BL/6J</strain>
        <tissue>Bone</tissue>
    </source>
</reference>
<reference key="5">
    <citation type="journal article" date="1993" name="J. Immunol.">
        <title>A novel function-associated molecule related to non-MHC-restricted cytotoxicity mediated by activated natural killer cells and T cells.</title>
        <authorList>
            <person name="Garni-Wagner B.A."/>
            <person name="Purohit A."/>
            <person name="Mathew P.A."/>
            <person name="Bennett M."/>
            <person name="Kumar V."/>
        </authorList>
    </citation>
    <scope>FUNCTION</scope>
    <scope>TISSUE SPECIFICITY</scope>
</reference>
<reference key="6">
    <citation type="journal article" date="1998" name="J. Exp. Med.">
        <title>2B4, the natural killer and T cell immunoglobulin superfamily surface protein, is a ligand for CD48.</title>
        <authorList>
            <person name="Brown M.H."/>
            <person name="Boles K."/>
            <person name="van der Merwe P.A."/>
            <person name="Kumar V."/>
            <person name="Mathew P.A."/>
            <person name="Barclay A.N."/>
        </authorList>
    </citation>
    <scope>INTERACTION WITH CD48</scope>
</reference>
<reference key="7">
    <citation type="journal article" date="2001" name="J. Immunol.">
        <title>Regulation of CD8(+) T cell proliferation by 2B4/CD48 interactions.</title>
        <authorList>
            <person name="Kambayashi T."/>
            <person name="Assarsson E."/>
            <person name="Chambers B.J."/>
            <person name="Ljunggren H.G."/>
        </authorList>
    </citation>
    <scope>FUNCTION</scope>
</reference>
<reference key="8">
    <citation type="journal article" date="2003" name="J. Immunol.">
        <title>The NK cell receptor 2B4 augments antigen-specific T cell cytotoxicity through CD48 ligation on neighboring T cells.</title>
        <authorList>
            <person name="Lee K.M."/>
            <person name="Bhawan S."/>
            <person name="Majima T."/>
            <person name="Wei H."/>
            <person name="Nishimura M.I."/>
            <person name="Yagita H."/>
            <person name="Kumar V."/>
        </authorList>
    </citation>
    <scope>FUNCTION</scope>
</reference>
<reference key="9">
    <citation type="journal article" date="2004" name="Mol. Cell. Biol.">
        <title>Molecular dissection of 2B4 signaling: implications for signal transduction by SLAM-related receptors.</title>
        <authorList>
            <person name="Chen R."/>
            <person name="Relouzat F."/>
            <person name="Roncagalli R."/>
            <person name="Aoukaty A."/>
            <person name="Tan R."/>
            <person name="Latour S."/>
            <person name="Veillette A."/>
        </authorList>
    </citation>
    <scope>FUNCTION</scope>
    <scope>DOMAIN ITSM MOTIF</scope>
    <scope>PHOSPHORYLATION AT TYR-266; TYR-325; TYR-344 AND TYR-369</scope>
    <scope>MUTAGENESIS OF TYR-266; TYR-325; TYR-344 AND TYR-369</scope>
</reference>
<reference key="10">
    <citation type="journal article" date="2005" name="J. Exp. Med.">
        <title>Regulation of natural cytotoxicity by the adaptor SAP and the Src-related kinase Fyn.</title>
        <authorList>
            <person name="Bloch-Queyrat C."/>
            <person name="Fondaneche M.C."/>
            <person name="Chen R."/>
            <person name="Yin L."/>
            <person name="Relouzat F."/>
            <person name="Veillette A."/>
            <person name="Fischer A."/>
            <person name="Latour S."/>
        </authorList>
    </citation>
    <scope>FUNCTION</scope>
</reference>
<reference key="11">
    <citation type="journal article" date="2005" name="Nat. Immunol.">
        <title>Negative regulation of natural killer cell function by EAT-2, a SAP-related adaptor.</title>
        <authorList>
            <person name="Roncagalli R."/>
            <person name="Taylor J.E."/>
            <person name="Zhang S."/>
            <person name="Shi X."/>
            <person name="Chen R."/>
            <person name="Cruz-Munoz M.E."/>
            <person name="Yin L."/>
            <person name="Latour S."/>
            <person name="Veillette A."/>
        </authorList>
    </citation>
    <scope>FUNCTION</scope>
    <scope>INTERACTION WITH SH2D1A; SH2D1B AND SH2D1B2</scope>
</reference>
<reference key="12">
    <citation type="journal article" date="2006" name="Blood">
        <title>Requirement of homotypic NK-cell interactions through 2B4(CD244)/CD48 in the generation of NK effector functions.</title>
        <authorList>
            <person name="Lee K.M."/>
            <person name="Forman J.P."/>
            <person name="McNerney M.E."/>
            <person name="Stepp S."/>
            <person name="Kuppireddi S."/>
            <person name="Guzior D."/>
            <person name="Latchman Y.E."/>
            <person name="Sayegh M.H."/>
            <person name="Yagita H."/>
            <person name="Park C.K."/>
            <person name="Oh S.B."/>
            <person name="Wuelfing C."/>
            <person name="Schatzle J."/>
            <person name="Mathew P.A."/>
            <person name="Sharpe A.H."/>
            <person name="Kumar V."/>
        </authorList>
    </citation>
    <scope>FUNCTION</scope>
    <scope>INTERACTION WITH CD48</scope>
</reference>
<reference key="13">
    <citation type="journal article" date="2006" name="Immunogenetics">
        <title>Identification and characterization of two related murine genes, Eat2a and Eat2b, encoding single SH2-domain adapters.</title>
        <authorList>
            <person name="Calpe S."/>
            <person name="Erdos E."/>
            <person name="Liao G."/>
            <person name="Wang N."/>
            <person name="Rietdijk S."/>
            <person name="Simarro M."/>
            <person name="Scholtz B."/>
            <person name="Mooney J."/>
            <person name="Lee C.H."/>
            <person name="Shin M.S."/>
            <person name="Rajnavoelgyi E."/>
            <person name="Schatzle J."/>
            <person name="Morse H.C. III"/>
            <person name="Terhorst C."/>
            <person name="Lanyi A."/>
        </authorList>
    </citation>
    <scope>FUNCTION</scope>
    <source>
        <strain>129/SvJ</strain>
        <strain>C57BL/6J</strain>
    </source>
</reference>
<reference key="14">
    <citation type="journal article" date="2009" name="Nat. Immunol.">
        <title>Essential function for SAP family adaptors in the surveillance of hematopoietic cells by natural killer cells.</title>
        <authorList>
            <person name="Dong Z."/>
            <person name="Cruz-Munoz M.E."/>
            <person name="Zhong M.C."/>
            <person name="Chen R."/>
            <person name="Latour S."/>
            <person name="Veillette A."/>
        </authorList>
    </citation>
    <scope>FUNCTION</scope>
</reference>
<reference key="15">
    <citation type="journal article" date="2010" name="J. Immunol.">
        <title>The adapters EAT-2A and -2B are positive regulators of CD244- and CD84-dependent NK cell functions in the C57BL/6 mouse.</title>
        <authorList>
            <person name="Wang N."/>
            <person name="Calpe S."/>
            <person name="Westcott J."/>
            <person name="Castro W."/>
            <person name="Ma C."/>
            <person name="Engel P."/>
            <person name="Schatzle J.D."/>
            <person name="Terhorst C."/>
        </authorList>
    </citation>
    <scope>FUNCTION</scope>
</reference>
<reference key="16">
    <citation type="journal article" date="2012" name="Immunity">
        <title>The adaptor SAP controls NK cell activation by regulating the enzymes Vav-1 and SHIP-1 and by enhancing conjugates with target cells.</title>
        <authorList>
            <person name="Dong Z."/>
            <person name="Davidson D."/>
            <person name="Perez-Quintero L.A."/>
            <person name="Kurosaki T."/>
            <person name="Swat W."/>
            <person name="Veillette A."/>
        </authorList>
    </citation>
    <scope>FUNCTION</scope>
</reference>
<reference key="17">
    <citation type="journal article" date="2015" name="Immunol. Cell Biol.">
        <title>CD244 is expressed on dendritic cells and regulates their functions.</title>
        <authorList>
            <person name="Georgoudaki A.M."/>
            <person name="Khodabandeh S."/>
            <person name="Puiac S."/>
            <person name="Persson C.M."/>
            <person name="Larsson M.K."/>
            <person name="Lind M."/>
            <person name="Hammarfjord O."/>
            <person name="Nabatti T.H."/>
            <person name="Wallin R.P."/>
            <person name="Yrlid U."/>
            <person name="Rhen M."/>
            <person name="Kumar V."/>
            <person name="Chambers B.J."/>
        </authorList>
    </citation>
    <scope>TISSUE SPECIFICITY</scope>
    <scope>FUNCTION</scope>
</reference>
<reference key="18">
    <citation type="journal article" date="2005" name="Biochemistry">
        <title>NMR structure of the natural killer cell receptor 2B4 (CD244): implications for ligand recognition.</title>
        <authorList>
            <person name="Ames J.B."/>
            <person name="Vyas V."/>
            <person name="Lusin J.D."/>
            <person name="Mariuzza R."/>
        </authorList>
    </citation>
    <scope>STRUCTURE BY NMR OF 21-129</scope>
    <scope>DISULFIDE BOND</scope>
</reference>
<reference key="19">
    <citation type="journal article" date="2007" name="Immunity">
        <title>Structure of natural killer receptor 2B4 bound to CD48 reveals basis for heterophilic recognition in signaling lymphocyte activation molecule family.</title>
        <authorList>
            <person name="Velikovsky C.A."/>
            <person name="Deng L."/>
            <person name="Chlewicki L.K."/>
            <person name="Fernandez M.M."/>
            <person name="Kumar V."/>
            <person name="Mariuzza R.A."/>
        </authorList>
    </citation>
    <scope>X-RAY CRYSTALLOGRAPHY (1.63 ANGSTROMS) OF 19-129 ALONE AND IN COMPLEX WITH CD48</scope>
    <scope>DISULFIDE BOND</scope>
</reference>
<dbReference type="EMBL" id="L19057">
    <property type="protein sequence ID" value="AAA16353.1"/>
    <property type="molecule type" value="mRNA"/>
</dbReference>
<dbReference type="EMBL" id="AF234831">
    <property type="protein sequence ID" value="AAF91290.1"/>
    <property type="molecule type" value="mRNA"/>
</dbReference>
<dbReference type="EMBL" id="AF082803">
    <property type="protein sequence ID" value="AAC34859.1"/>
    <property type="molecule type" value="mRNA"/>
</dbReference>
<dbReference type="EMBL" id="AK137505">
    <property type="protein sequence ID" value="BAE23386.1"/>
    <property type="molecule type" value="mRNA"/>
</dbReference>
<dbReference type="CCDS" id="CCDS35778.1">
    <molecule id="Q07763-1"/>
</dbReference>
<dbReference type="PIR" id="I49443">
    <property type="entry name" value="I49443"/>
</dbReference>
<dbReference type="RefSeq" id="NP_061199.2">
    <molecule id="Q07763-1"/>
    <property type="nucleotide sequence ID" value="NM_018729.2"/>
</dbReference>
<dbReference type="PDB" id="1Z2K">
    <property type="method" value="NMR"/>
    <property type="chains" value="A=21-129"/>
</dbReference>
<dbReference type="PDB" id="2PTT">
    <property type="method" value="X-ray"/>
    <property type="resolution" value="1.63 A"/>
    <property type="chains" value="B=19-129"/>
</dbReference>
<dbReference type="PDB" id="2PTU">
    <property type="method" value="X-ray"/>
    <property type="resolution" value="2.38 A"/>
    <property type="chains" value="A/B/C/D=19-129"/>
</dbReference>
<dbReference type="PDBsum" id="1Z2K"/>
<dbReference type="PDBsum" id="2PTT"/>
<dbReference type="PDBsum" id="2PTU"/>
<dbReference type="SMR" id="Q07763"/>
<dbReference type="BioGRID" id="201792">
    <property type="interactions" value="2"/>
</dbReference>
<dbReference type="FunCoup" id="Q07763">
    <property type="interactions" value="232"/>
</dbReference>
<dbReference type="STRING" id="10090.ENSMUSP00000004829"/>
<dbReference type="GlyCosmos" id="Q07763">
    <property type="glycosylation" value="7 sites, No reported glycans"/>
</dbReference>
<dbReference type="GlyGen" id="Q07763">
    <property type="glycosylation" value="7 sites"/>
</dbReference>
<dbReference type="iPTMnet" id="Q07763"/>
<dbReference type="PhosphoSitePlus" id="Q07763"/>
<dbReference type="PaxDb" id="10090-ENSMUSP00000004829"/>
<dbReference type="ProteomicsDB" id="283743">
    <molecule id="Q07763-1"/>
</dbReference>
<dbReference type="ProteomicsDB" id="283744">
    <molecule id="Q07763-2"/>
</dbReference>
<dbReference type="Antibodypedia" id="2392">
    <property type="antibodies" value="853 antibodies from 43 providers"/>
</dbReference>
<dbReference type="DNASU" id="18106"/>
<dbReference type="Ensembl" id="ENSMUST00000004829.13">
    <molecule id="Q07763-1"/>
    <property type="protein sequence ID" value="ENSMUSP00000004829.8"/>
    <property type="gene ID" value="ENSMUSG00000004709.15"/>
</dbReference>
<dbReference type="GeneID" id="18106"/>
<dbReference type="KEGG" id="mmu:18106"/>
<dbReference type="UCSC" id="uc007dor.1">
    <molecule id="Q07763-2"/>
    <property type="organism name" value="mouse"/>
</dbReference>
<dbReference type="UCSC" id="uc007dos.1">
    <molecule id="Q07763-1"/>
    <property type="organism name" value="mouse"/>
</dbReference>
<dbReference type="AGR" id="MGI:109294"/>
<dbReference type="CTD" id="18106"/>
<dbReference type="MGI" id="MGI:109294">
    <property type="gene designation" value="Cd244"/>
</dbReference>
<dbReference type="VEuPathDB" id="HostDB:ENSMUSG00000004709"/>
<dbReference type="eggNOG" id="ENOG502S7N7">
    <property type="taxonomic scope" value="Eukaryota"/>
</dbReference>
<dbReference type="GeneTree" id="ENSGT01030000234540"/>
<dbReference type="HOGENOM" id="CLU_065827_0_0_1"/>
<dbReference type="InParanoid" id="Q07763"/>
<dbReference type="OMA" id="VDIHGTH"/>
<dbReference type="OrthoDB" id="8955135at2759"/>
<dbReference type="PhylomeDB" id="Q07763"/>
<dbReference type="TreeFam" id="TF334964"/>
<dbReference type="Reactome" id="R-MMU-202733">
    <property type="pathway name" value="Cell surface interactions at the vascular wall"/>
</dbReference>
<dbReference type="BioGRID-ORCS" id="18106">
    <property type="hits" value="4 hits in 77 CRISPR screens"/>
</dbReference>
<dbReference type="EvolutionaryTrace" id="Q07763"/>
<dbReference type="PRO" id="PR:Q07763"/>
<dbReference type="Proteomes" id="UP000000589">
    <property type="component" value="Chromosome 1"/>
</dbReference>
<dbReference type="RNAct" id="Q07763">
    <property type="molecule type" value="protein"/>
</dbReference>
<dbReference type="Bgee" id="ENSMUSG00000004709">
    <property type="expression patterns" value="Expressed in granulocyte and 49 other cell types or tissues"/>
</dbReference>
<dbReference type="ExpressionAtlas" id="Q07763">
    <property type="expression patterns" value="baseline and differential"/>
</dbReference>
<dbReference type="GO" id="GO:0009897">
    <property type="term" value="C:external side of plasma membrane"/>
    <property type="evidence" value="ECO:0000314"/>
    <property type="project" value="MGI"/>
</dbReference>
<dbReference type="GO" id="GO:0045121">
    <property type="term" value="C:membrane raft"/>
    <property type="evidence" value="ECO:0007669"/>
    <property type="project" value="UniProtKB-SubCell"/>
</dbReference>
<dbReference type="GO" id="GO:0002250">
    <property type="term" value="P:adaptive immune response"/>
    <property type="evidence" value="ECO:0007669"/>
    <property type="project" value="UniProtKB-KW"/>
</dbReference>
<dbReference type="GO" id="GO:0001773">
    <property type="term" value="P:myeloid dendritic cell activation"/>
    <property type="evidence" value="ECO:0000315"/>
    <property type="project" value="UniProtKB"/>
</dbReference>
<dbReference type="GO" id="GO:0002323">
    <property type="term" value="P:natural killer cell activation involved in immune response"/>
    <property type="evidence" value="ECO:0000315"/>
    <property type="project" value="UniProtKB"/>
</dbReference>
<dbReference type="GO" id="GO:2000566">
    <property type="term" value="P:positive regulation of CD8-positive, alpha-beta T cell proliferation"/>
    <property type="evidence" value="ECO:0000315"/>
    <property type="project" value="UniProtKB"/>
</dbReference>
<dbReference type="GO" id="GO:0032819">
    <property type="term" value="P:positive regulation of natural killer cell proliferation"/>
    <property type="evidence" value="ECO:0000315"/>
    <property type="project" value="UniProtKB"/>
</dbReference>
<dbReference type="CDD" id="cd05741">
    <property type="entry name" value="IgV_CEACAM_like"/>
    <property type="match status" value="1"/>
</dbReference>
<dbReference type="FunFam" id="2.60.40.10:FF:003605">
    <property type="entry name" value="Natural killer cell receptor 2B4"/>
    <property type="match status" value="1"/>
</dbReference>
<dbReference type="Gene3D" id="2.60.40.10">
    <property type="entry name" value="Immunoglobulins"/>
    <property type="match status" value="2"/>
</dbReference>
<dbReference type="InterPro" id="IPR015631">
    <property type="entry name" value="CD2/SLAM_rcpt"/>
</dbReference>
<dbReference type="InterPro" id="IPR036179">
    <property type="entry name" value="Ig-like_dom_sf"/>
</dbReference>
<dbReference type="InterPro" id="IPR013783">
    <property type="entry name" value="Ig-like_fold"/>
</dbReference>
<dbReference type="InterPro" id="IPR024303">
    <property type="entry name" value="NK_rcpt_2B4_Ig_dom"/>
</dbReference>
<dbReference type="PANTHER" id="PTHR12080:SF56">
    <property type="entry name" value="NATURAL KILLER CELL RECEPTOR 2B4"/>
    <property type="match status" value="1"/>
</dbReference>
<dbReference type="PANTHER" id="PTHR12080">
    <property type="entry name" value="SIGNALING LYMPHOCYTIC ACTIVATION MOLECULE"/>
    <property type="match status" value="1"/>
</dbReference>
<dbReference type="Pfam" id="PF11465">
    <property type="entry name" value="Receptor_2B4"/>
    <property type="match status" value="1"/>
</dbReference>
<dbReference type="SUPFAM" id="SSF48726">
    <property type="entry name" value="Immunoglobulin"/>
    <property type="match status" value="1"/>
</dbReference>
<comment type="function">
    <text evidence="3 6 7 8 11 14 15 16 18 23 24">Heterophilic receptor of the signaling lymphocytic activation molecule (SLAM) family; its ligand is CD48. SLAM receptors triggered by homo- or heterotypic cell-cell interactions are modulating the activation and differentiation of a wide variety of immune cells and thus are involved in the regulation and interconnection of both innate and adaptive immune response. Activities are controlled by presence or absence of small cytoplasmic adapter proteins, SH2D1A/SAP and/or SH2D1B/EAT-2. Acts as activating natural killer (NK) cell receptor (PubMed:12734329, PubMed:19648922, PubMed:20962259, PubMed:8326140). Activating function implicates association with SH2D1A and FYN. Downstreaming signaling involves predominantly VAV1, and, to a lesser degree, INPP5D/SHIP1 and CBL. Signal attenuation in the absence of SH2D1A is proposed to be dependent on INPP5D and to a lesser extent PTPN6/SHP-1 and PTPN11/SHP-2. Stimulates NK cell cytotoxicity, production of IFN-gamma and granule exocytosis (PubMed:15169881, PubMed:15998796, PubMed:22683124, PubMed:8326140). Optimal expansion and activation of NK cells seems to be dependent on the engagement of CD244 with CD48 expressed on neighboring NK cells (PubMed:15905190). Regulation of NK cell activity by adapters Sh2d1b and Sh2d1b2 is reported conflictingly (PubMed:16127454, PubMed:16425036). Acts as costimulator in NK activation by enhancing signals by other NK receptors such as NCR3 and NCR1. At early stages of NK cell differentiation may function as an inhibitory receptor possibly ensuring the self-tolerance of developing NK cells (By similarity). Involved in the regulation of CD8(+) T-cell proliferation; expression on activated T-cells and binding to CD48 provides costimulatory-like function for neighboring T-cells (PubMed:11739483). Inhibits inflammatory responses in dendritic cells (DCs) (PubMed:25643613).</text>
</comment>
<comment type="subunit">
    <text evidence="3 10 12 19">Interacts with CD48 (PubMed:15905190, PubMed:9841922). Interacts (via phosphorylated ITSM 1-4) with SH2D1A/SAP (via SH2 domain); SH2D1A probably mediates association with FYN. Interacts (via phosphorylated ITSM 3) with PTPN11/SHP-2, INPP5D/SHIP1, PTPN6/SHP-1 and CSK; binding of SH2D1A prevents association with PTPN11, PTPN6 and CSK. Interacts weakly (via phosphorylated ITSM 2) with PTPN11 and CSK. Interacts with SH2D1B and SH2D1B2. Interacts with MHC class I proteins; the interaction is proposed to prevent self-killing of NK cells (By similarity).</text>
</comment>
<comment type="subcellular location">
    <subcellularLocation>
        <location evidence="3">Membrane</location>
        <topology evidence="3">Single-pass type I membrane protein</topology>
    </subcellularLocation>
    <subcellularLocation>
        <location evidence="3">Cell membrane</location>
    </subcellularLocation>
    <subcellularLocation>
        <location evidence="3">Membrane raft</location>
    </subcellularLocation>
    <text evidence="3">Receptor engagement results in a recruitment to lipid drafts essential for the subsequent tyrosine phosphorylation of the ITSMs.</text>
</comment>
<comment type="alternative products">
    <event type="alternative splicing"/>
    <isoform>
        <id>Q07763-1</id>
        <name>1</name>
        <name>m2B4L</name>
        <sequence type="displayed"/>
    </isoform>
    <isoform>
        <id>Q07763-2</id>
        <name>2</name>
        <name>m2B4S</name>
        <sequence type="described" ref="VSP_010401 VSP_010402"/>
    </isoform>
</comment>
<comment type="tissue specificity">
    <text evidence="17 18">Expressed in natural killer (NK) cells, T cells and dendritic cells.</text>
</comment>
<comment type="domain">
    <text evidence="2 22">The ITSMs (immunoreceptor tyrosine-based switch motifs) with the consensus sequence T-X-Y-X-X-[VI] present in SLAM family receptors have overlapping specificity for activating and inhibitory SH2 domain-containing binding partners. Especially they mediate the interaction with the SH2 domain of SH2D1A and SH2D1B. A 'three-pronged' mechanism is proposed involving threonine (position -2), phosphorylated tyrosine (position 0) and valine/isoleucine (position +3).</text>
</comment>
<comment type="PTM">
    <text evidence="3">N-linked glycosylation is essential for the binding to its ligand CD48. Also O-glycosylated, in contrast, O-linked sialylation has a negative impact on ligand binding.</text>
</comment>
<comment type="PTM">
    <text evidence="3">Phosphorylated by FYN and CSK on tyrosine residues following activation. Coligation with inhibitory receptors such as KIR2DL1 inhibits phosphorylation upon contact of NK cells with sensitive target cells.</text>
</comment>
<accession>Q07763</accession>
<accession>O88654</accession>
<accession>Q3UV86</accession>
<accession>Q9JIE0</accession>
<feature type="signal peptide" evidence="4">
    <location>
        <begin position="1"/>
        <end position="19"/>
    </location>
</feature>
<feature type="chain" id="PRO_0000014669" description="Natural killer cell receptor 2B4">
    <location>
        <begin position="20"/>
        <end position="397"/>
    </location>
</feature>
<feature type="topological domain" description="Extracellular" evidence="4">
    <location>
        <begin position="20"/>
        <end position="226"/>
    </location>
</feature>
<feature type="transmembrane region" description="Helical" evidence="4">
    <location>
        <begin position="227"/>
        <end position="247"/>
    </location>
</feature>
<feature type="topological domain" description="Cytoplasmic" evidence="4">
    <location>
        <begin position="248"/>
        <end position="397"/>
    </location>
</feature>
<feature type="domain" description="Ig-like 1">
    <location>
        <begin position="22"/>
        <end position="129"/>
    </location>
</feature>
<feature type="domain" description="Ig-like 2">
    <location>
        <begin position="131"/>
        <end position="215"/>
    </location>
</feature>
<feature type="region of interest" description="Disordered" evidence="5">
    <location>
        <begin position="277"/>
        <end position="300"/>
    </location>
</feature>
<feature type="short sequence motif" description="ITSM 1" evidence="2">
    <location>
        <begin position="264"/>
        <end position="269"/>
    </location>
</feature>
<feature type="short sequence motif" description="ITSM 2" evidence="2">
    <location>
        <begin position="323"/>
        <end position="328"/>
    </location>
</feature>
<feature type="short sequence motif" description="ITSM 3" evidence="2">
    <location>
        <begin position="342"/>
        <end position="347"/>
    </location>
</feature>
<feature type="short sequence motif" description="ITSM 4" evidence="2">
    <location>
        <begin position="367"/>
        <end position="372"/>
    </location>
</feature>
<feature type="compositionally biased region" description="Polar residues" evidence="5">
    <location>
        <begin position="277"/>
        <end position="290"/>
    </location>
</feature>
<feature type="modified residue" description="Phosphotyrosine" evidence="22">
    <location>
        <position position="266"/>
    </location>
</feature>
<feature type="modified residue" description="Phosphotyrosine; by FYN" evidence="22">
    <location>
        <position position="325"/>
    </location>
</feature>
<feature type="modified residue" description="Phosphotyrosine" evidence="22">
    <location>
        <position position="344"/>
    </location>
</feature>
<feature type="modified residue" description="Phosphotyrosine; by FYN" evidence="22">
    <location>
        <position position="369"/>
    </location>
</feature>
<feature type="glycosylation site" description="N-linked (GlcNAc...) asparagine" evidence="4">
    <location>
        <position position="78"/>
    </location>
</feature>
<feature type="glycosylation site" description="N-linked (GlcNAc...) asparagine" evidence="4">
    <location>
        <position position="145"/>
    </location>
</feature>
<feature type="glycosylation site" description="N-linked (GlcNAc...) asparagine" evidence="4">
    <location>
        <position position="161"/>
    </location>
</feature>
<feature type="glycosylation site" description="N-linked (GlcNAc...) asparagine" evidence="4">
    <location>
        <position position="178"/>
    </location>
</feature>
<feature type="glycosylation site" description="N-linked (GlcNAc...) asparagine" evidence="4">
    <location>
        <position position="197"/>
    </location>
</feature>
<feature type="glycosylation site" description="N-linked (GlcNAc...) asparagine" evidence="4">
    <location>
        <position position="206"/>
    </location>
</feature>
<feature type="glycosylation site" description="N-linked (GlcNAc...) asparagine" evidence="4">
    <location>
        <position position="210"/>
    </location>
</feature>
<feature type="disulfide bond" evidence="9 13">
    <location>
        <begin position="22"/>
        <end position="119"/>
    </location>
</feature>
<feature type="disulfide bond" evidence="1">
    <location>
        <begin position="154"/>
        <end position="196"/>
    </location>
</feature>
<feature type="splice variant" id="VSP_010401" description="In isoform 2." evidence="20">
    <original>LEQLPQQTFPGDRGTMYSMIQCKPSDSTSQEK</original>
    <variation>MFSSLLAFLLHQFPGSTQRGKEKRERAEKNGK</variation>
    <location>
        <begin position="309"/>
        <end position="340"/>
    </location>
</feature>
<feature type="splice variant" id="VSP_010402" description="In isoform 2." evidence="20">
    <location>
        <begin position="341"/>
        <end position="397"/>
    </location>
</feature>
<feature type="mutagenesis site" description="Abolishes downstream phosphorylation of CBL and VAV1; when associated with F-325, F-344 and F-369." evidence="8">
    <original>Y</original>
    <variation>F</variation>
    <location>
        <position position="266"/>
    </location>
</feature>
<feature type="mutagenesis site" description="Decreases downstream phosphorylation of CBL and VAV1." evidence="8">
    <original>Y</original>
    <variation>F</variation>
    <location>
        <position position="266"/>
    </location>
</feature>
<feature type="mutagenesis site" description="Abolishes downstream phosphorylation of CBL and VAV1; when associated with F-266, F-344 and F-369." evidence="8">
    <original>Y</original>
    <variation>F</variation>
    <location>
        <position position="325"/>
    </location>
</feature>
<feature type="mutagenesis site" description="Weakly decreases downstream phosphorylation of CBL and VAV1; when associated with F-344 and F-369." evidence="8">
    <original>Y</original>
    <variation>F</variation>
    <location>
        <position position="325"/>
    </location>
</feature>
<feature type="mutagenesis site" description="Abolishes downstream phosphorylation of CBL and VAV1; when associated with F-266, F-325 and F-369." evidence="8">
    <original>Y</original>
    <variation>F</variation>
    <location>
        <position position="344"/>
    </location>
</feature>
<feature type="mutagenesis site" description="Weakly decreases downstream phosphorylation of CBL and VAV1; when associated with F-325 and F-369." evidence="8">
    <original>Y</original>
    <variation>F</variation>
    <location>
        <position position="344"/>
    </location>
</feature>
<feature type="mutagenesis site" description="Abolishes downstream phosphorylation of CBL and VAV1; when associated with F-266, F-325 and F-344." evidence="8">
    <original>Y</original>
    <variation>F</variation>
    <location>
        <position position="369"/>
    </location>
</feature>
<feature type="mutagenesis site" description="Weakly decreases downstream phosphorylation of CBL and VAV1; when associated with F-325 and F-344." evidence="8">
    <original>Y</original>
    <variation>F</variation>
    <location>
        <position position="369"/>
    </location>
</feature>
<feature type="sequence conflict" description="In Ref. 2; AAF91290." evidence="21" ref="2">
    <original>Q</original>
    <variation>P</variation>
    <location>
        <position position="38"/>
    </location>
</feature>
<feature type="sequence conflict" description="In Ref. 2; AAF91290." evidence="21" ref="2">
    <original>V</original>
    <variation>A</variation>
    <location>
        <position position="156"/>
    </location>
</feature>
<feature type="sequence conflict" description="In Ref. 1; AAA16353." evidence="21" ref="1">
    <original>L</original>
    <variation>FW</variation>
    <location>
        <position position="166"/>
    </location>
</feature>
<feature type="sequence conflict" description="In Ref. 1; AAA16353." evidence="21" ref="1">
    <original>S</original>
    <variation>Y</variation>
    <location>
        <position position="362"/>
    </location>
</feature>
<feature type="strand" evidence="25">
    <location>
        <begin position="25"/>
        <end position="31"/>
    </location>
</feature>
<feature type="strand" evidence="25">
    <location>
        <begin position="37"/>
        <end position="39"/>
    </location>
</feature>
<feature type="strand" evidence="25">
    <location>
        <begin position="50"/>
        <end position="56"/>
    </location>
</feature>
<feature type="strand" evidence="26">
    <location>
        <begin position="60"/>
        <end position="62"/>
    </location>
</feature>
<feature type="strand" evidence="25">
    <location>
        <begin position="63"/>
        <end position="73"/>
    </location>
</feature>
<feature type="strand" evidence="25">
    <location>
        <begin position="76"/>
        <end position="78"/>
    </location>
</feature>
<feature type="helix" evidence="25">
    <location>
        <begin position="79"/>
        <end position="83"/>
    </location>
</feature>
<feature type="strand" evidence="25">
    <location>
        <begin position="85"/>
        <end position="87"/>
    </location>
</feature>
<feature type="turn" evidence="25">
    <location>
        <begin position="89"/>
        <end position="91"/>
    </location>
</feature>
<feature type="strand" evidence="25">
    <location>
        <begin position="94"/>
        <end position="98"/>
    </location>
</feature>
<feature type="helix" evidence="25">
    <location>
        <begin position="101"/>
        <end position="103"/>
    </location>
</feature>
<feature type="strand" evidence="25">
    <location>
        <begin position="105"/>
        <end position="112"/>
    </location>
</feature>
<feature type="strand" evidence="25">
    <location>
        <begin position="117"/>
        <end position="127"/>
    </location>
</feature>
<keyword id="KW-0002">3D-structure</keyword>
<keyword id="KW-1064">Adaptive immunity</keyword>
<keyword id="KW-0025">Alternative splicing</keyword>
<keyword id="KW-1003">Cell membrane</keyword>
<keyword id="KW-1015">Disulfide bond</keyword>
<keyword id="KW-0325">Glycoprotein</keyword>
<keyword id="KW-0391">Immunity</keyword>
<keyword id="KW-0393">Immunoglobulin domain</keyword>
<keyword id="KW-0399">Innate immunity</keyword>
<keyword id="KW-0472">Membrane</keyword>
<keyword id="KW-0597">Phosphoprotein</keyword>
<keyword id="KW-0675">Receptor</keyword>
<keyword id="KW-1185">Reference proteome</keyword>
<keyword id="KW-0677">Repeat</keyword>
<keyword id="KW-0732">Signal</keyword>
<keyword id="KW-0812">Transmembrane</keyword>
<keyword id="KW-1133">Transmembrane helix</keyword>
<sequence length="397" mass="44836">MLGQAVLFTTFLLLRAHQGQDCPDSSEEVVGVSGKPVQLRPSNIQTKDVSVQWKKTEQGSHRKIEILNWYNDGPSWSNVSFSDIYGFDYGDFALSIKSAKLQDSGHYLLEITNTGGKVCNKNFQLLILDHVETPNLKAQWKPWTNGTCQLFLSCLVTKDDNVSYALYRGSTLISNQRNSTHWENQIDASSLHTYTCNVSNRASWANHTLNFTHGCQSVPSNFRFLPFGVIIVILVTLFLGAIICFCVWTKKRKQLQFSPKEPLTIYEYVKDSRASRDQQGCSRASGSPSAVQEDGRGQRELDRRVSEVLEQLPQQTFPGDRGTMYSMIQCKPSDSTSQEKCTVYSVVQPSRKSGSKKRNQNSSLSCTVYEEVGNPWLKAHNPARLSRRELENFDVYS</sequence>
<proteinExistence type="evidence at protein level"/>